<sequence length="306" mass="34191">MSQDRLLRNVISVMIMAGYEVSEVFAMRPKSFDIIAGNGERIVVLKVISHIDSISEENARDLDRIARNLDGTPLIVGERARDAELERGAVYVRYGIFAINYPTLHDYFVEDSPPLIYASPGGLYVNISGERLRELRETRSLSLGDLGQILGVSRRTVAKYEAGMGTTIEIALRIEETFDSGVIEPIDLIQSKSQFTKPEMPEVPEEIPIQAAIEEMGMHVQPMYHAPFQALVRYDSHTILTGYGSAQKVARRAGIIGNISQVTRTHAMCVMTDDQRQRRIGRTLMIGEDSLLSLDEPDDLINLILN</sequence>
<gene>
    <name type="ordered locus">Mhun_2548</name>
</gene>
<dbReference type="EMBL" id="CP000254">
    <property type="protein sequence ID" value="ABD42247.1"/>
    <property type="molecule type" value="Genomic_DNA"/>
</dbReference>
<dbReference type="RefSeq" id="WP_011449504.1">
    <property type="nucleotide sequence ID" value="NC_007796.1"/>
</dbReference>
<dbReference type="SMR" id="Q2FTM0"/>
<dbReference type="FunCoup" id="Q2FTM0">
    <property type="interactions" value="4"/>
</dbReference>
<dbReference type="STRING" id="323259.Mhun_2548"/>
<dbReference type="EnsemblBacteria" id="ABD42247">
    <property type="protein sequence ID" value="ABD42247"/>
    <property type="gene ID" value="Mhun_2548"/>
</dbReference>
<dbReference type="GeneID" id="3922492"/>
<dbReference type="KEGG" id="mhu:Mhun_2548"/>
<dbReference type="eggNOG" id="arCOG04152">
    <property type="taxonomic scope" value="Archaea"/>
</dbReference>
<dbReference type="HOGENOM" id="CLU_075726_0_0_2"/>
<dbReference type="InParanoid" id="Q2FTM0"/>
<dbReference type="OrthoDB" id="31424at2157"/>
<dbReference type="Proteomes" id="UP000001941">
    <property type="component" value="Chromosome"/>
</dbReference>
<dbReference type="GO" id="GO:0003677">
    <property type="term" value="F:DNA binding"/>
    <property type="evidence" value="ECO:0007669"/>
    <property type="project" value="UniProtKB-KW"/>
</dbReference>
<dbReference type="GO" id="GO:0003700">
    <property type="term" value="F:DNA-binding transcription factor activity"/>
    <property type="evidence" value="ECO:0007669"/>
    <property type="project" value="UniProtKB-UniRule"/>
</dbReference>
<dbReference type="CDD" id="cd00093">
    <property type="entry name" value="HTH_XRE"/>
    <property type="match status" value="1"/>
</dbReference>
<dbReference type="Gene3D" id="1.10.260.40">
    <property type="entry name" value="lambda repressor-like DNA-binding domains"/>
    <property type="match status" value="1"/>
</dbReference>
<dbReference type="HAMAP" id="MF_00584">
    <property type="entry name" value="HTH_type_cro_C1"/>
    <property type="match status" value="1"/>
</dbReference>
<dbReference type="InterPro" id="IPR020886">
    <property type="entry name" value="Arc_TR_HTH"/>
</dbReference>
<dbReference type="InterPro" id="IPR001387">
    <property type="entry name" value="Cro/C1-type_HTH"/>
</dbReference>
<dbReference type="InterPro" id="IPR010982">
    <property type="entry name" value="Lambda_DNA-bd_dom_sf"/>
</dbReference>
<dbReference type="NCBIfam" id="NF003162">
    <property type="entry name" value="PRK04140.1"/>
    <property type="match status" value="1"/>
</dbReference>
<dbReference type="Pfam" id="PF01381">
    <property type="entry name" value="HTH_3"/>
    <property type="match status" value="1"/>
</dbReference>
<dbReference type="SMART" id="SM00530">
    <property type="entry name" value="HTH_XRE"/>
    <property type="match status" value="1"/>
</dbReference>
<dbReference type="SUPFAM" id="SSF47413">
    <property type="entry name" value="lambda repressor-like DNA-binding domains"/>
    <property type="match status" value="1"/>
</dbReference>
<dbReference type="PROSITE" id="PS50943">
    <property type="entry name" value="HTH_CROC1"/>
    <property type="match status" value="1"/>
</dbReference>
<name>Y2548_METHJ</name>
<protein>
    <recommendedName>
        <fullName evidence="1">Putative HTH-type transcriptional regulatory protein Mhun_2548</fullName>
    </recommendedName>
</protein>
<proteinExistence type="inferred from homology"/>
<accession>Q2FTM0</accession>
<reference key="1">
    <citation type="journal article" date="2016" name="Stand. Genomic Sci.">
        <title>Complete genome sequence of Methanospirillum hungatei type strain JF1.</title>
        <authorList>
            <person name="Gunsalus R.P."/>
            <person name="Cook L.E."/>
            <person name="Crable B."/>
            <person name="Rohlin L."/>
            <person name="McDonald E."/>
            <person name="Mouttaki H."/>
            <person name="Sieber J.R."/>
            <person name="Poweleit N."/>
            <person name="Zhou H."/>
            <person name="Lapidus A.L."/>
            <person name="Daligault H.E."/>
            <person name="Land M."/>
            <person name="Gilna P."/>
            <person name="Ivanova N."/>
            <person name="Kyrpides N."/>
            <person name="Culley D.E."/>
            <person name="McInerney M.J."/>
        </authorList>
    </citation>
    <scope>NUCLEOTIDE SEQUENCE [LARGE SCALE GENOMIC DNA]</scope>
    <source>
        <strain>ATCC 27890 / DSM 864 / NBRC 100397 / JF-1</strain>
    </source>
</reference>
<feature type="chain" id="PRO_0000259361" description="Putative HTH-type transcriptional regulatory protein Mhun_2548">
    <location>
        <begin position="1"/>
        <end position="306"/>
    </location>
</feature>
<feature type="domain" description="HTH cro/C1-type" evidence="1">
    <location>
        <begin position="132"/>
        <end position="189"/>
    </location>
</feature>
<feature type="DNA-binding region" description="H-T-H motif" evidence="1">
    <location>
        <begin position="143"/>
        <end position="162"/>
    </location>
</feature>
<organism>
    <name type="scientific">Methanospirillum hungatei JF-1 (strain ATCC 27890 / DSM 864 / NBRC 100397 / JF-1)</name>
    <dbReference type="NCBI Taxonomy" id="323259"/>
    <lineage>
        <taxon>Archaea</taxon>
        <taxon>Methanobacteriati</taxon>
        <taxon>Methanobacteriota</taxon>
        <taxon>Stenosarchaea group</taxon>
        <taxon>Methanomicrobia</taxon>
        <taxon>Methanomicrobiales</taxon>
        <taxon>Methanospirillaceae</taxon>
        <taxon>Methanospirillum</taxon>
    </lineage>
</organism>
<evidence type="ECO:0000255" key="1">
    <source>
        <dbReference type="HAMAP-Rule" id="MF_00584"/>
    </source>
</evidence>
<keyword id="KW-0238">DNA-binding</keyword>
<keyword id="KW-1185">Reference proteome</keyword>
<keyword id="KW-0804">Transcription</keyword>
<keyword id="KW-0805">Transcription regulation</keyword>